<reference key="1">
    <citation type="journal article" date="1986" name="J. Mol. Biol.">
        <title>Sequence of the short unique region, short repeats, and part of the long repeats of human cytomegalovirus.</title>
        <authorList>
            <person name="Weston K.M."/>
            <person name="Barrell B.G."/>
        </authorList>
    </citation>
    <scope>NUCLEOTIDE SEQUENCE [GENOMIC DNA]</scope>
</reference>
<reference key="2">
    <citation type="journal article" date="1990" name="Curr. Top. Microbiol. Immunol.">
        <title>Analysis of the protein-coding content of the sequence of human cytomegalovirus strain AD169.</title>
        <authorList>
            <person name="Chee M.S."/>
            <person name="Bankier A.T."/>
            <person name="Beck S."/>
            <person name="Bohni R."/>
            <person name="Brown C.M."/>
            <person name="Cerny R."/>
            <person name="Horsnell T."/>
            <person name="Hutchison C.A. III"/>
            <person name="Kouzarides T."/>
            <person name="Martignetti J.A."/>
            <person name="Preddie E."/>
            <person name="Satchwell S.C."/>
            <person name="Tomlinson P."/>
            <person name="Weston K.M."/>
            <person name="Barrell B.G."/>
        </authorList>
    </citation>
    <scope>NUCLEOTIDE SEQUENCE [LARGE SCALE GENOMIC DNA]</scope>
</reference>
<reference key="3">
    <citation type="journal article" date="2003" name="J. Gen. Virol.">
        <title>The human cytomegalovirus genome revisited: comparison with the chimpanzee cytomegalovirus genome.</title>
        <authorList>
            <person name="Davison A.J."/>
            <person name="Dolan A."/>
            <person name="Akter P."/>
            <person name="Addison C."/>
            <person name="Dargan D.J."/>
            <person name="Alcendor D.J."/>
            <person name="McGeoch D.J."/>
            <person name="Hayward G.S."/>
        </authorList>
    </citation>
    <scope>GENOME REANNOTATION</scope>
</reference>
<reference key="4">
    <citation type="journal article" date="2003" name="J. Gen. Virol.">
        <authorList>
            <person name="Davison A.J."/>
            <person name="Dolan A."/>
            <person name="Akter P."/>
            <person name="Addison C."/>
            <person name="Dargan D.J."/>
            <person name="Alcendor D.J."/>
            <person name="McGeoch D.J."/>
            <person name="Hayward G.S."/>
        </authorList>
    </citation>
    <scope>ERRATUM OF PUBMED:12533697</scope>
</reference>
<reference key="5">
    <citation type="journal article" date="1998" name="J. Virol.">
        <title>A novel human cytomegalovirus glycoprotein, gpUS9, which promotes cell-to-cell spread in polarized epithelial cells, colocalizes with the cytoskeletal proteins E-cadherin and F-actin.</title>
        <authorList>
            <person name="Maidji E."/>
            <person name="Tugizov S."/>
            <person name="Abenes G."/>
            <person name="Jones T."/>
            <person name="Pereira L."/>
        </authorList>
    </citation>
    <scope>SUBCELLULAR LOCATION</scope>
</reference>
<organismHost>
    <name type="scientific">Homo sapiens</name>
    <name type="common">Human</name>
    <dbReference type="NCBI Taxonomy" id="9606"/>
</organismHost>
<comment type="subcellular location">
    <subcellularLocation>
        <location evidence="3">Host endoplasmic reticulum membrane</location>
        <topology evidence="3">Single-pass type I membrane protein</topology>
    </subcellularLocation>
    <subcellularLocation>
        <location evidence="3">Host Golgi apparatus membrane</location>
        <topology evidence="3">Single-pass type I membrane protein</topology>
    </subcellularLocation>
</comment>
<comment type="similarity">
    <text evidence="4">Belongs to the cytomegalovirus US6 family.</text>
</comment>
<proteinExistence type="inferred from homology"/>
<accession>P09730</accession>
<accession>Q7M6G3</accession>
<evidence type="ECO:0000250" key="1"/>
<evidence type="ECO:0000255" key="2"/>
<evidence type="ECO:0000269" key="3">
    <source>
    </source>
</evidence>
<evidence type="ECO:0000305" key="4"/>
<keyword id="KW-1015">Disulfide bond</keyword>
<keyword id="KW-0325">Glycoprotein</keyword>
<keyword id="KW-1038">Host endoplasmic reticulum</keyword>
<keyword id="KW-1040">Host Golgi apparatus</keyword>
<keyword id="KW-1043">Host membrane</keyword>
<keyword id="KW-0393">Immunoglobulin domain</keyword>
<keyword id="KW-0472">Membrane</keyword>
<keyword id="KW-1185">Reference proteome</keyword>
<keyword id="KW-0732">Signal</keyword>
<keyword id="KW-0812">Transmembrane</keyword>
<keyword id="KW-1133">Transmembrane helix</keyword>
<feature type="signal peptide" evidence="2">
    <location>
        <begin position="1"/>
        <end position="21"/>
    </location>
</feature>
<feature type="chain" id="PRO_0000037441" description="Unique short US8 glycoprotein">
    <location>
        <begin position="22"/>
        <end position="227"/>
    </location>
</feature>
<feature type="topological domain" description="Lumenal" evidence="2">
    <location>
        <begin position="22"/>
        <end position="178"/>
    </location>
</feature>
<feature type="transmembrane region" description="Helical" evidence="2">
    <location>
        <begin position="179"/>
        <end position="199"/>
    </location>
</feature>
<feature type="topological domain" description="Cytoplasmic" evidence="2">
    <location>
        <begin position="200"/>
        <end position="227"/>
    </location>
</feature>
<feature type="domain" description="Ig-like H-type">
    <location>
        <begin position="61"/>
        <end position="155"/>
    </location>
</feature>
<feature type="glycosylation site" description="N-linked (GlcNAc...) asparagine; by host" evidence="2">
    <location>
        <position position="61"/>
    </location>
</feature>
<feature type="disulfide bond" evidence="1">
    <location>
        <begin position="69"/>
        <end position="151"/>
    </location>
</feature>
<dbReference type="EMBL" id="X17403">
    <property type="protein sequence ID" value="CAA35275.1"/>
    <property type="molecule type" value="Genomic_DNA"/>
</dbReference>
<dbReference type="EMBL" id="X04650">
    <property type="protein sequence ID" value="CAB37100.1"/>
    <property type="molecule type" value="Genomic_DNA"/>
</dbReference>
<dbReference type="EMBL" id="BK000394">
    <property type="protein sequence ID" value="DAA00225.1"/>
    <property type="molecule type" value="Genomic_DNA"/>
</dbReference>
<dbReference type="PIR" id="S09922">
    <property type="entry name" value="QQBEC9"/>
</dbReference>
<dbReference type="GlyCosmos" id="P09730">
    <property type="glycosylation" value="1 site, No reported glycans"/>
</dbReference>
<dbReference type="Proteomes" id="UP000008991">
    <property type="component" value="Segment"/>
</dbReference>
<dbReference type="Proteomes" id="UP000008992">
    <property type="component" value="Segment"/>
</dbReference>
<dbReference type="GO" id="GO:0044167">
    <property type="term" value="C:host cell endoplasmic reticulum membrane"/>
    <property type="evidence" value="ECO:0007669"/>
    <property type="project" value="UniProtKB-SubCell"/>
</dbReference>
<dbReference type="GO" id="GO:0044178">
    <property type="term" value="C:host cell Golgi membrane"/>
    <property type="evidence" value="ECO:0007669"/>
    <property type="project" value="UniProtKB-SubCell"/>
</dbReference>
<dbReference type="GO" id="GO:0016020">
    <property type="term" value="C:membrane"/>
    <property type="evidence" value="ECO:0007669"/>
    <property type="project" value="UniProtKB-KW"/>
</dbReference>
<dbReference type="GO" id="GO:0052031">
    <property type="term" value="P:symbiont-mediated perturbation of host defense response"/>
    <property type="evidence" value="ECO:0007669"/>
    <property type="project" value="InterPro"/>
</dbReference>
<dbReference type="InterPro" id="IPR012536">
    <property type="entry name" value="CMV_US"/>
</dbReference>
<dbReference type="Pfam" id="PF08001">
    <property type="entry name" value="CMV_US"/>
    <property type="match status" value="1"/>
</dbReference>
<gene>
    <name type="primary">US8</name>
</gene>
<protein>
    <recommendedName>
        <fullName>Unique short US8 glycoprotein</fullName>
    </recommendedName>
    <alternativeName>
        <fullName>Protein HXLF4</fullName>
    </alternativeName>
    <alternativeName>
        <fullName>gpUS8</fullName>
    </alternativeName>
</protein>
<sequence length="227" mass="26633">MRRWLRLLVGLGCCWVTLAHAGNPYEDDDYYYYREDEPRQHGEPNYVAPPARQFRFPPLNNVSSYQASCVVKDGVLDAVWRVQGTFYPEKGIVARVGWSGRRGRKWGRLHAPECLVETTEAVFRLRQWVPTDLDHLTLHLVPCTKCKPMWCQPRYHIRYFSYGNSVDNLRRLHYEYRHLELGVVIAICMAMVLLLGYVLARTVYRVSSAYYLRWHACVPQKCEKSLC</sequence>
<organism>
    <name type="scientific">Human cytomegalovirus (strain AD169)</name>
    <name type="common">HHV-5</name>
    <name type="synonym">Human herpesvirus 5</name>
    <dbReference type="NCBI Taxonomy" id="10360"/>
    <lineage>
        <taxon>Viruses</taxon>
        <taxon>Duplodnaviria</taxon>
        <taxon>Heunggongvirae</taxon>
        <taxon>Peploviricota</taxon>
        <taxon>Herviviricetes</taxon>
        <taxon>Herpesvirales</taxon>
        <taxon>Orthoherpesviridae</taxon>
        <taxon>Betaherpesvirinae</taxon>
        <taxon>Cytomegalovirus</taxon>
        <taxon>Cytomegalovirus humanbeta5</taxon>
        <taxon>Human cytomegalovirus</taxon>
    </lineage>
</organism>
<name>US08_HCMVA</name>